<keyword id="KW-0067">ATP-binding</keyword>
<keyword id="KW-0093">Biotin biosynthesis</keyword>
<keyword id="KW-0963">Cytoplasm</keyword>
<keyword id="KW-0436">Ligase</keyword>
<keyword id="KW-0460">Magnesium</keyword>
<keyword id="KW-0479">Metal-binding</keyword>
<keyword id="KW-0547">Nucleotide-binding</keyword>
<accession>Q2GDE9</accession>
<reference key="1">
    <citation type="journal article" date="2006" name="PLoS Genet.">
        <title>Comparative genomics of emerging human ehrlichiosis agents.</title>
        <authorList>
            <person name="Dunning Hotopp J.C."/>
            <person name="Lin M."/>
            <person name="Madupu R."/>
            <person name="Crabtree J."/>
            <person name="Angiuoli S.V."/>
            <person name="Eisen J.A."/>
            <person name="Seshadri R."/>
            <person name="Ren Q."/>
            <person name="Wu M."/>
            <person name="Utterback T.R."/>
            <person name="Smith S."/>
            <person name="Lewis M."/>
            <person name="Khouri H."/>
            <person name="Zhang C."/>
            <person name="Niu H."/>
            <person name="Lin Q."/>
            <person name="Ohashi N."/>
            <person name="Zhi N."/>
            <person name="Nelson W.C."/>
            <person name="Brinkac L.M."/>
            <person name="Dodson R.J."/>
            <person name="Rosovitz M.J."/>
            <person name="Sundaram J.P."/>
            <person name="Daugherty S.C."/>
            <person name="Davidsen T."/>
            <person name="Durkin A.S."/>
            <person name="Gwinn M.L."/>
            <person name="Haft D.H."/>
            <person name="Selengut J.D."/>
            <person name="Sullivan S.A."/>
            <person name="Zafar N."/>
            <person name="Zhou L."/>
            <person name="Benahmed F."/>
            <person name="Forberger H."/>
            <person name="Halpin R."/>
            <person name="Mulligan S."/>
            <person name="Robinson J."/>
            <person name="White O."/>
            <person name="Rikihisa Y."/>
            <person name="Tettelin H."/>
        </authorList>
    </citation>
    <scope>NUCLEOTIDE SEQUENCE [LARGE SCALE GENOMIC DNA]</scope>
    <source>
        <strain>ATCC VR-367 / Miyayama</strain>
    </source>
</reference>
<protein>
    <recommendedName>
        <fullName evidence="1">ATP-dependent dethiobiotin synthetase BioD</fullName>
        <ecNumber evidence="1">6.3.3.3</ecNumber>
    </recommendedName>
    <alternativeName>
        <fullName evidence="1">DTB synthetase</fullName>
        <shortName evidence="1">DTBS</shortName>
    </alternativeName>
    <alternativeName>
        <fullName evidence="1">Dethiobiotin synthase</fullName>
    </alternativeName>
</protein>
<evidence type="ECO:0000255" key="1">
    <source>
        <dbReference type="HAMAP-Rule" id="MF_00336"/>
    </source>
</evidence>
<sequence>MAIFITGTDTNVGKTIISTWICLHLGWGYFKPIQTGGNSDSDFVSSTTGVPAYDSVFSFPDPIAPHVAAKMSGSSIDILKIQLPEYRKSLSNKINSIPTTEHGRSKFISATTQTKYWEKENNKIVIEGAGGVLVPLQENGTKMVDLIQHLNVPVIIVSRSTLGAINHTLLTLEALQAREIKVLGIVINSMCEDFLDYNSKAIAEYGSTEILATFPYLKEVTRDSILSVQMGDSMKALLESTLKCKNSLL</sequence>
<name>BIOD_NEOSM</name>
<gene>
    <name evidence="1" type="primary">bioD</name>
    <name type="ordered locus">NSE_0617</name>
</gene>
<comment type="function">
    <text evidence="1">Catalyzes a mechanistically unusual reaction, the ATP-dependent insertion of CO2 between the N7 and N8 nitrogen atoms of 7,8-diaminopelargonic acid (DAPA, also called 7,8-diammoniononanoate) to form a ureido ring.</text>
</comment>
<comment type="catalytic activity">
    <reaction evidence="1">
        <text>(7R,8S)-7,8-diammoniononanoate + CO2 + ATP = (4R,5S)-dethiobiotin + ADP + phosphate + 3 H(+)</text>
        <dbReference type="Rhea" id="RHEA:15805"/>
        <dbReference type="ChEBI" id="CHEBI:15378"/>
        <dbReference type="ChEBI" id="CHEBI:16526"/>
        <dbReference type="ChEBI" id="CHEBI:30616"/>
        <dbReference type="ChEBI" id="CHEBI:43474"/>
        <dbReference type="ChEBI" id="CHEBI:149469"/>
        <dbReference type="ChEBI" id="CHEBI:149473"/>
        <dbReference type="ChEBI" id="CHEBI:456216"/>
        <dbReference type="EC" id="6.3.3.3"/>
    </reaction>
</comment>
<comment type="cofactor">
    <cofactor evidence="1">
        <name>Mg(2+)</name>
        <dbReference type="ChEBI" id="CHEBI:18420"/>
    </cofactor>
</comment>
<comment type="pathway">
    <text evidence="1">Cofactor biosynthesis; biotin biosynthesis; biotin from 7,8-diaminononanoate: step 1/2.</text>
</comment>
<comment type="subunit">
    <text evidence="1">Homodimer.</text>
</comment>
<comment type="subcellular location">
    <subcellularLocation>
        <location evidence="1">Cytoplasm</location>
    </subcellularLocation>
</comment>
<comment type="similarity">
    <text evidence="1">Belongs to the dethiobiotin synthetase family.</text>
</comment>
<organism>
    <name type="scientific">Neorickettsia sennetsu (strain ATCC VR-367 / Miyayama)</name>
    <name type="common">Ehrlichia sennetsu</name>
    <dbReference type="NCBI Taxonomy" id="222891"/>
    <lineage>
        <taxon>Bacteria</taxon>
        <taxon>Pseudomonadati</taxon>
        <taxon>Pseudomonadota</taxon>
        <taxon>Alphaproteobacteria</taxon>
        <taxon>Rickettsiales</taxon>
        <taxon>Anaplasmataceae</taxon>
        <taxon>Neorickettsia</taxon>
    </lineage>
</organism>
<dbReference type="EC" id="6.3.3.3" evidence="1"/>
<dbReference type="EMBL" id="CP000237">
    <property type="protein sequence ID" value="ABD46510.1"/>
    <property type="molecule type" value="Genomic_DNA"/>
</dbReference>
<dbReference type="RefSeq" id="WP_011452003.1">
    <property type="nucleotide sequence ID" value="NC_007798.1"/>
</dbReference>
<dbReference type="SMR" id="Q2GDE9"/>
<dbReference type="STRING" id="222891.NSE_0617"/>
<dbReference type="KEGG" id="nse:NSE_0617"/>
<dbReference type="eggNOG" id="COG0132">
    <property type="taxonomic scope" value="Bacteria"/>
</dbReference>
<dbReference type="HOGENOM" id="CLU_072551_3_0_5"/>
<dbReference type="OrthoDB" id="9802097at2"/>
<dbReference type="UniPathway" id="UPA00078">
    <property type="reaction ID" value="UER00161"/>
</dbReference>
<dbReference type="Proteomes" id="UP000001942">
    <property type="component" value="Chromosome"/>
</dbReference>
<dbReference type="GO" id="GO:0005829">
    <property type="term" value="C:cytosol"/>
    <property type="evidence" value="ECO:0007669"/>
    <property type="project" value="TreeGrafter"/>
</dbReference>
<dbReference type="GO" id="GO:0005524">
    <property type="term" value="F:ATP binding"/>
    <property type="evidence" value="ECO:0007669"/>
    <property type="project" value="UniProtKB-UniRule"/>
</dbReference>
<dbReference type="GO" id="GO:0004141">
    <property type="term" value="F:dethiobiotin synthase activity"/>
    <property type="evidence" value="ECO:0007669"/>
    <property type="project" value="UniProtKB-UniRule"/>
</dbReference>
<dbReference type="GO" id="GO:0000287">
    <property type="term" value="F:magnesium ion binding"/>
    <property type="evidence" value="ECO:0007669"/>
    <property type="project" value="UniProtKB-UniRule"/>
</dbReference>
<dbReference type="GO" id="GO:0009102">
    <property type="term" value="P:biotin biosynthetic process"/>
    <property type="evidence" value="ECO:0007669"/>
    <property type="project" value="UniProtKB-UniRule"/>
</dbReference>
<dbReference type="CDD" id="cd03109">
    <property type="entry name" value="DTBS"/>
    <property type="match status" value="1"/>
</dbReference>
<dbReference type="Gene3D" id="3.40.50.300">
    <property type="entry name" value="P-loop containing nucleotide triphosphate hydrolases"/>
    <property type="match status" value="1"/>
</dbReference>
<dbReference type="HAMAP" id="MF_00336">
    <property type="entry name" value="BioD"/>
    <property type="match status" value="1"/>
</dbReference>
<dbReference type="InterPro" id="IPR004472">
    <property type="entry name" value="DTB_synth_BioD"/>
</dbReference>
<dbReference type="InterPro" id="IPR027417">
    <property type="entry name" value="P-loop_NTPase"/>
</dbReference>
<dbReference type="PANTHER" id="PTHR43210">
    <property type="entry name" value="DETHIOBIOTIN SYNTHETASE"/>
    <property type="match status" value="1"/>
</dbReference>
<dbReference type="PANTHER" id="PTHR43210:SF5">
    <property type="entry name" value="DETHIOBIOTIN SYNTHETASE"/>
    <property type="match status" value="1"/>
</dbReference>
<dbReference type="Pfam" id="PF13500">
    <property type="entry name" value="AAA_26"/>
    <property type="match status" value="1"/>
</dbReference>
<dbReference type="PIRSF" id="PIRSF006755">
    <property type="entry name" value="DTB_synth"/>
    <property type="match status" value="1"/>
</dbReference>
<dbReference type="SUPFAM" id="SSF52540">
    <property type="entry name" value="P-loop containing nucleoside triphosphate hydrolases"/>
    <property type="match status" value="1"/>
</dbReference>
<proteinExistence type="inferred from homology"/>
<feature type="chain" id="PRO_0000302534" description="ATP-dependent dethiobiotin synthetase BioD">
    <location>
        <begin position="1"/>
        <end position="249"/>
    </location>
</feature>
<feature type="active site" evidence="1">
    <location>
        <position position="31"/>
    </location>
</feature>
<feature type="binding site" evidence="1">
    <location>
        <begin position="11"/>
        <end position="16"/>
    </location>
    <ligand>
        <name>ATP</name>
        <dbReference type="ChEBI" id="CHEBI:30616"/>
    </ligand>
</feature>
<feature type="binding site" evidence="1">
    <location>
        <position position="15"/>
    </location>
    <ligand>
        <name>Mg(2+)</name>
        <dbReference type="ChEBI" id="CHEBI:18420"/>
    </ligand>
</feature>
<feature type="binding site" evidence="1">
    <location>
        <position position="35"/>
    </location>
    <ligand>
        <name>substrate</name>
    </ligand>
</feature>
<feature type="binding site" evidence="1">
    <location>
        <position position="40"/>
    </location>
    <ligand>
        <name>ATP</name>
        <dbReference type="ChEBI" id="CHEBI:30616"/>
    </ligand>
</feature>
<feature type="binding site" evidence="1">
    <location>
        <position position="40"/>
    </location>
    <ligand>
        <name>Mg(2+)</name>
        <dbReference type="ChEBI" id="CHEBI:18420"/>
    </ligand>
</feature>
<feature type="binding site" evidence="1">
    <location>
        <begin position="127"/>
        <end position="130"/>
    </location>
    <ligand>
        <name>ATP</name>
        <dbReference type="ChEBI" id="CHEBI:30616"/>
    </ligand>
</feature>
<feature type="binding site" evidence="1">
    <location>
        <position position="127"/>
    </location>
    <ligand>
        <name>Mg(2+)</name>
        <dbReference type="ChEBI" id="CHEBI:18420"/>
    </ligand>
</feature>
<feature type="binding site" evidence="1">
    <location>
        <begin position="188"/>
        <end position="189"/>
    </location>
    <ligand>
        <name>ATP</name>
        <dbReference type="ChEBI" id="CHEBI:30616"/>
    </ligand>
</feature>
<feature type="binding site" evidence="1">
    <location>
        <begin position="215"/>
        <end position="217"/>
    </location>
    <ligand>
        <name>ATP</name>
        <dbReference type="ChEBI" id="CHEBI:30616"/>
    </ligand>
</feature>